<reference key="1">
    <citation type="journal article" date="2011" name="J. Bacteriol.">
        <title>Comparative genomics of 28 Salmonella enterica isolates: evidence for CRISPR-mediated adaptive sublineage evolution.</title>
        <authorList>
            <person name="Fricke W.F."/>
            <person name="Mammel M.K."/>
            <person name="McDermott P.F."/>
            <person name="Tartera C."/>
            <person name="White D.G."/>
            <person name="Leclerc J.E."/>
            <person name="Ravel J."/>
            <person name="Cebula T.A."/>
        </authorList>
    </citation>
    <scope>NUCLEOTIDE SEQUENCE [LARGE SCALE GENOMIC DNA]</scope>
    <source>
        <strain>SL254</strain>
    </source>
</reference>
<evidence type="ECO:0000255" key="1">
    <source>
        <dbReference type="HAMAP-Rule" id="MF_00662"/>
    </source>
</evidence>
<evidence type="ECO:0000256" key="2">
    <source>
        <dbReference type="SAM" id="MobiDB-lite"/>
    </source>
</evidence>
<protein>
    <recommendedName>
        <fullName evidence="1">Phosphatidylserine decarboxylase proenzyme</fullName>
        <ecNumber evidence="1">4.1.1.65</ecNumber>
    </recommendedName>
    <component>
        <recommendedName>
            <fullName evidence="1">Phosphatidylserine decarboxylase alpha chain</fullName>
        </recommendedName>
    </component>
    <component>
        <recommendedName>
            <fullName evidence="1">Phosphatidylserine decarboxylase beta chain</fullName>
        </recommendedName>
    </component>
</protein>
<sequence>MLNSFKLSLQYILPKLWLTRLAGWGASKRAGWLTKLVIDLFVKYYKVDMTEAQKPDTASYRTFNDFFVRPLRDDVRPLNTDPNILVMPADGVISQLGRIEEDKILQAKGHNYSLEALLAGNYLMADKFRNGTFVTTYLSPRDYHRVHMPCNGILREMIYVPGDLFSVNHLTAQNVPNLFARNERVICLFDTEFGPMAQILVGATIVGSIETVWAGTITPPREGIIKRWTWPEGEHEGSVALLKGQEMGRFKLGSTVINLFAPGKVNLIASLASLSVTKIGQPLATSTETFVAPEVEPAPLPAEEIKAEHDASPLVDNKKDDT</sequence>
<comment type="function">
    <text evidence="1">Catalyzes the formation of phosphatidylethanolamine (PtdEtn) from phosphatidylserine (PtdSer).</text>
</comment>
<comment type="catalytic activity">
    <reaction evidence="1">
        <text>a 1,2-diacyl-sn-glycero-3-phospho-L-serine + H(+) = a 1,2-diacyl-sn-glycero-3-phosphoethanolamine + CO2</text>
        <dbReference type="Rhea" id="RHEA:20828"/>
        <dbReference type="ChEBI" id="CHEBI:15378"/>
        <dbReference type="ChEBI" id="CHEBI:16526"/>
        <dbReference type="ChEBI" id="CHEBI:57262"/>
        <dbReference type="ChEBI" id="CHEBI:64612"/>
        <dbReference type="EC" id="4.1.1.65"/>
    </reaction>
</comment>
<comment type="cofactor">
    <cofactor evidence="1">
        <name>pyruvate</name>
        <dbReference type="ChEBI" id="CHEBI:15361"/>
    </cofactor>
    <text evidence="1">Binds 1 pyruvoyl group covalently per subunit.</text>
</comment>
<comment type="pathway">
    <text evidence="1">Phospholipid metabolism; phosphatidylethanolamine biosynthesis; phosphatidylethanolamine from CDP-diacylglycerol: step 2/2.</text>
</comment>
<comment type="subunit">
    <text evidence="1">Heterodimer of a large membrane-associated beta subunit and a small pyruvoyl-containing alpha subunit.</text>
</comment>
<comment type="subcellular location">
    <subcellularLocation>
        <location evidence="1">Cell membrane</location>
        <topology evidence="1">Peripheral membrane protein</topology>
    </subcellularLocation>
</comment>
<comment type="PTM">
    <text evidence="1">Is synthesized initially as an inactive proenzyme. Formation of the active enzyme involves a self-maturation process in which the active site pyruvoyl group is generated from an internal serine residue via an autocatalytic post-translational modification. Two non-identical subunits are generated from the proenzyme in this reaction, and the pyruvate is formed at the N-terminus of the alpha chain, which is derived from the carboxyl end of the proenzyme. The autoendoproteolytic cleavage occurs by a canonical serine protease mechanism, in which the side chain hydroxyl group of the serine supplies its oxygen atom to form the C-terminus of the beta chain, while the remainder of the serine residue undergoes an oxidative deamination to produce ammonia and the pyruvoyl prosthetic group on the alpha chain. During this reaction, the Ser that is part of the protease active site of the proenzyme becomes the pyruvoyl prosthetic group, which constitutes an essential element of the active site of the mature decarboxylase.</text>
</comment>
<comment type="similarity">
    <text evidence="1">Belongs to the phosphatidylserine decarboxylase family. PSD-B subfamily. Prokaryotic type I sub-subfamily.</text>
</comment>
<name>PSD_SALNS</name>
<keyword id="KW-1003">Cell membrane</keyword>
<keyword id="KW-0210">Decarboxylase</keyword>
<keyword id="KW-0444">Lipid biosynthesis</keyword>
<keyword id="KW-0443">Lipid metabolism</keyword>
<keyword id="KW-0456">Lyase</keyword>
<keyword id="KW-0472">Membrane</keyword>
<keyword id="KW-0594">Phospholipid biosynthesis</keyword>
<keyword id="KW-1208">Phospholipid metabolism</keyword>
<keyword id="KW-0670">Pyruvate</keyword>
<keyword id="KW-0865">Zymogen</keyword>
<accession>B4T2Q7</accession>
<dbReference type="EC" id="4.1.1.65" evidence="1"/>
<dbReference type="EMBL" id="CP001113">
    <property type="protein sequence ID" value="ACF63753.1"/>
    <property type="molecule type" value="Genomic_DNA"/>
</dbReference>
<dbReference type="SMR" id="B4T2Q7"/>
<dbReference type="KEGG" id="see:SNSL254_A4709"/>
<dbReference type="HOGENOM" id="CLU_029061_4_1_6"/>
<dbReference type="UniPathway" id="UPA00558">
    <property type="reaction ID" value="UER00616"/>
</dbReference>
<dbReference type="Proteomes" id="UP000008824">
    <property type="component" value="Chromosome"/>
</dbReference>
<dbReference type="GO" id="GO:0005886">
    <property type="term" value="C:plasma membrane"/>
    <property type="evidence" value="ECO:0007669"/>
    <property type="project" value="UniProtKB-SubCell"/>
</dbReference>
<dbReference type="GO" id="GO:0004609">
    <property type="term" value="F:phosphatidylserine decarboxylase activity"/>
    <property type="evidence" value="ECO:0007669"/>
    <property type="project" value="UniProtKB-UniRule"/>
</dbReference>
<dbReference type="GO" id="GO:0006646">
    <property type="term" value="P:phosphatidylethanolamine biosynthetic process"/>
    <property type="evidence" value="ECO:0007669"/>
    <property type="project" value="UniProtKB-UniRule"/>
</dbReference>
<dbReference type="HAMAP" id="MF_00662">
    <property type="entry name" value="PS_decarb_PSD_B_type1"/>
    <property type="match status" value="1"/>
</dbReference>
<dbReference type="InterPro" id="IPR003817">
    <property type="entry name" value="PS_Dcarbxylase"/>
</dbReference>
<dbReference type="InterPro" id="IPR033177">
    <property type="entry name" value="PSD-B"/>
</dbReference>
<dbReference type="InterPro" id="IPR033178">
    <property type="entry name" value="PSD_type1_pro"/>
</dbReference>
<dbReference type="NCBIfam" id="TIGR00163">
    <property type="entry name" value="PS_decarb"/>
    <property type="match status" value="1"/>
</dbReference>
<dbReference type="PANTHER" id="PTHR10067">
    <property type="entry name" value="PHOSPHATIDYLSERINE DECARBOXYLASE"/>
    <property type="match status" value="1"/>
</dbReference>
<dbReference type="PANTHER" id="PTHR10067:SF6">
    <property type="entry name" value="PHOSPHATIDYLSERINE DECARBOXYLASE PROENZYME, MITOCHONDRIAL"/>
    <property type="match status" value="1"/>
</dbReference>
<dbReference type="Pfam" id="PF02666">
    <property type="entry name" value="PS_Dcarbxylase"/>
    <property type="match status" value="1"/>
</dbReference>
<gene>
    <name evidence="1" type="primary">psd</name>
    <name type="ordered locus">SNSL254_A4709</name>
</gene>
<proteinExistence type="inferred from homology"/>
<organism>
    <name type="scientific">Salmonella newport (strain SL254)</name>
    <dbReference type="NCBI Taxonomy" id="423368"/>
    <lineage>
        <taxon>Bacteria</taxon>
        <taxon>Pseudomonadati</taxon>
        <taxon>Pseudomonadota</taxon>
        <taxon>Gammaproteobacteria</taxon>
        <taxon>Enterobacterales</taxon>
        <taxon>Enterobacteriaceae</taxon>
        <taxon>Salmonella</taxon>
    </lineage>
</organism>
<feature type="chain" id="PRO_1000131400" description="Phosphatidylserine decarboxylase beta chain" evidence="1">
    <location>
        <begin position="1"/>
        <end position="253"/>
    </location>
</feature>
<feature type="chain" id="PRO_1000131401" description="Phosphatidylserine decarboxylase alpha chain" evidence="1">
    <location>
        <begin position="254"/>
        <end position="322"/>
    </location>
</feature>
<feature type="region of interest" description="Disordered" evidence="2">
    <location>
        <begin position="296"/>
        <end position="322"/>
    </location>
</feature>
<feature type="compositionally biased region" description="Basic and acidic residues" evidence="2">
    <location>
        <begin position="303"/>
        <end position="322"/>
    </location>
</feature>
<feature type="active site" description="Charge relay system; for autoendoproteolytic cleavage activity" evidence="1">
    <location>
        <position position="90"/>
    </location>
</feature>
<feature type="active site" description="Charge relay system; for autoendoproteolytic cleavage activity" evidence="1">
    <location>
        <position position="147"/>
    </location>
</feature>
<feature type="active site" description="Charge relay system; for autoendoproteolytic cleavage activity" evidence="1">
    <location>
        <position position="254"/>
    </location>
</feature>
<feature type="active site" description="Schiff-base intermediate with substrate; via pyruvic acid; for decarboxylase activity" evidence="1">
    <location>
        <position position="254"/>
    </location>
</feature>
<feature type="site" description="Cleavage (non-hydrolytic); by autocatalysis" evidence="1">
    <location>
        <begin position="253"/>
        <end position="254"/>
    </location>
</feature>
<feature type="modified residue" description="Pyruvic acid (Ser); by autocatalysis" evidence="1">
    <location>
        <position position="254"/>
    </location>
</feature>